<dbReference type="SMR" id="Q5DRE1"/>
<dbReference type="FunCoup" id="Q5DRE1">
    <property type="interactions" value="119"/>
</dbReference>
<dbReference type="STRING" id="9598.ENSPTRP00000029626"/>
<dbReference type="GlyCosmos" id="Q5DRE1">
    <property type="glycosylation" value="4 sites, No reported glycans"/>
</dbReference>
<dbReference type="PaxDb" id="9598-ENSPTRP00000029626"/>
<dbReference type="eggNOG" id="KOG3594">
    <property type="taxonomic scope" value="Eukaryota"/>
</dbReference>
<dbReference type="InParanoid" id="Q5DRE1"/>
<dbReference type="Proteomes" id="UP000002277">
    <property type="component" value="Unplaced"/>
</dbReference>
<dbReference type="GO" id="GO:0005886">
    <property type="term" value="C:plasma membrane"/>
    <property type="evidence" value="ECO:0000318"/>
    <property type="project" value="GO_Central"/>
</dbReference>
<dbReference type="GO" id="GO:0005509">
    <property type="term" value="F:calcium ion binding"/>
    <property type="evidence" value="ECO:0007669"/>
    <property type="project" value="InterPro"/>
</dbReference>
<dbReference type="GO" id="GO:0007155">
    <property type="term" value="P:cell adhesion"/>
    <property type="evidence" value="ECO:0000318"/>
    <property type="project" value="GO_Central"/>
</dbReference>
<dbReference type="GO" id="GO:0007156">
    <property type="term" value="P:homophilic cell adhesion via plasma membrane adhesion molecules"/>
    <property type="evidence" value="ECO:0007669"/>
    <property type="project" value="InterPro"/>
</dbReference>
<dbReference type="GO" id="GO:0007399">
    <property type="term" value="P:nervous system development"/>
    <property type="evidence" value="ECO:0007669"/>
    <property type="project" value="UniProtKB-ARBA"/>
</dbReference>
<dbReference type="CDD" id="cd11304">
    <property type="entry name" value="Cadherin_repeat"/>
    <property type="match status" value="6"/>
</dbReference>
<dbReference type="FunFam" id="2.60.40.60:FF:000004">
    <property type="entry name" value="Protocadherin 1 gamma 2"/>
    <property type="match status" value="1"/>
</dbReference>
<dbReference type="FunFam" id="2.60.40.60:FF:000001">
    <property type="entry name" value="Protocadherin alpha 2"/>
    <property type="match status" value="1"/>
</dbReference>
<dbReference type="FunFam" id="2.60.40.60:FF:000002">
    <property type="entry name" value="Protocadherin alpha 2"/>
    <property type="match status" value="1"/>
</dbReference>
<dbReference type="FunFam" id="2.60.40.60:FF:000006">
    <property type="entry name" value="Protocadherin alpha 2"/>
    <property type="match status" value="1"/>
</dbReference>
<dbReference type="FunFam" id="2.60.40.60:FF:000007">
    <property type="entry name" value="Protocadherin alpha 2"/>
    <property type="match status" value="1"/>
</dbReference>
<dbReference type="FunFam" id="2.60.40.60:FF:000129">
    <property type="entry name" value="protocadherin alpha-C2 isoform X1"/>
    <property type="match status" value="1"/>
</dbReference>
<dbReference type="Gene3D" id="2.60.40.60">
    <property type="entry name" value="Cadherins"/>
    <property type="match status" value="6"/>
</dbReference>
<dbReference type="InterPro" id="IPR002126">
    <property type="entry name" value="Cadherin-like_dom"/>
</dbReference>
<dbReference type="InterPro" id="IPR015919">
    <property type="entry name" value="Cadherin-like_sf"/>
</dbReference>
<dbReference type="InterPro" id="IPR032455">
    <property type="entry name" value="Cadherin_C"/>
</dbReference>
<dbReference type="InterPro" id="IPR031904">
    <property type="entry name" value="Cadherin_CBD"/>
</dbReference>
<dbReference type="InterPro" id="IPR020894">
    <property type="entry name" value="Cadherin_CS"/>
</dbReference>
<dbReference type="InterPro" id="IPR013164">
    <property type="entry name" value="Cadherin_N"/>
</dbReference>
<dbReference type="InterPro" id="IPR050174">
    <property type="entry name" value="Protocadherin/Cadherin-CA"/>
</dbReference>
<dbReference type="PANTHER" id="PTHR24028">
    <property type="entry name" value="CADHERIN-87A"/>
    <property type="match status" value="1"/>
</dbReference>
<dbReference type="PANTHER" id="PTHR24028:SF119">
    <property type="entry name" value="PROTOCADHERIN ALPHA-C2"/>
    <property type="match status" value="1"/>
</dbReference>
<dbReference type="Pfam" id="PF00028">
    <property type="entry name" value="Cadherin"/>
    <property type="match status" value="5"/>
</dbReference>
<dbReference type="Pfam" id="PF08266">
    <property type="entry name" value="Cadherin_2"/>
    <property type="match status" value="1"/>
</dbReference>
<dbReference type="Pfam" id="PF16492">
    <property type="entry name" value="Cadherin_C_2"/>
    <property type="match status" value="1"/>
</dbReference>
<dbReference type="Pfam" id="PF15974">
    <property type="entry name" value="Cadherin_tail"/>
    <property type="match status" value="1"/>
</dbReference>
<dbReference type="PRINTS" id="PR00205">
    <property type="entry name" value="CADHERIN"/>
</dbReference>
<dbReference type="SMART" id="SM00112">
    <property type="entry name" value="CA"/>
    <property type="match status" value="6"/>
</dbReference>
<dbReference type="SUPFAM" id="SSF49313">
    <property type="entry name" value="Cadherin-like"/>
    <property type="match status" value="6"/>
</dbReference>
<dbReference type="PROSITE" id="PS00232">
    <property type="entry name" value="CADHERIN_1"/>
    <property type="match status" value="5"/>
</dbReference>
<dbReference type="PROSITE" id="PS50268">
    <property type="entry name" value="CADHERIN_2"/>
    <property type="match status" value="6"/>
</dbReference>
<sequence>MEQAGTRPAATEHPRLRRPMPWLLLLPLLLLLLLLLPGPAASQLRYSVPEEQAPGALVGNVARALGLELRRLGPGCLRINHLGAPSPRYLELDLTSGALFVNERIDREALCEQRPRCLLSLEVLAHNPVAVSAVEVEILDINDNSPRFPRPNYQLQVSESVAPGARFHIESAQDPDVGANSVQTYELSPSEHFELDLKPLQENSKVLELVLRKGLDREQAALHHLVLTAVDGGIPARSGTAQISVRVLDTNDNSPAFDQSTYRVQLREDSPPGTLVVKLNASDPDEGSNGELRYSLSSYTSDRERQLFSIDASTGEVRVIGGLDYEEASSYQIYVQATDRGPVPMAGHCKVLVDIVDVNDNAPEVVLTDLYSPVPENATPNTIVAVLSVNDQDSGPNRKVSLGLEATLPFRLNGFGNSYTLVVSGPLDRERVAVYNITVTATDGGIPQLTSLRTLKVEISDINDNPPSFLEDSYSIYIQENNLPGVLLCTVQATDPDEKENAEVTYSLLEREIQGLPVTSYVSINSASGSLYAVNSFDYEKFREFFVTVEAQDKGNPPLSSTGTANVYVVDMNDHAPHILYPSSTNSSAAFEMGPRTAPAGYLVTKVIAMDSDSGQNAWLFYHLAQTSDLDLFKVELHTGEIRTTRKMGDESGSTFNLTVVVRDNGEPSLSASVAITVAVVDRVSKILPDTQRHVKSPRTYSEITLYLIIALSTVSFIFLLTIIILSIIKCYRYTAYGTACCGGFCGVRERSPAELYKQANNNIDARIPHGLKVQPHFIEVRGNGSLTKTYCYKACLTAGSGSDTFMFYNTGAQTGPGPSGAQAAVTDSRNLTGQSGQNAGNLIILKNEAVSQNEPRQPNPDWRYSASLRAGMHSSVHLEEAGILRAGPGGPDQQWPTVSSATPEPEAGEVSPPVGAGVNSNSWTFKYGPGNPKQSGPGELPDKFIIPGSPAIISIRQEPANSQIDKSDFITFGKKEETKKKKKKKKGNKTQEKKEKGNSTTDNSDQ</sequence>
<evidence type="ECO:0000250" key="1"/>
<evidence type="ECO:0000255" key="2"/>
<evidence type="ECO:0000255" key="3">
    <source>
        <dbReference type="PROSITE-ProRule" id="PRU00043"/>
    </source>
</evidence>
<evidence type="ECO:0000256" key="4">
    <source>
        <dbReference type="SAM" id="MobiDB-lite"/>
    </source>
</evidence>
<organism>
    <name type="scientific">Pan troglodytes</name>
    <name type="common">Chimpanzee</name>
    <dbReference type="NCBI Taxonomy" id="9598"/>
    <lineage>
        <taxon>Eukaryota</taxon>
        <taxon>Metazoa</taxon>
        <taxon>Chordata</taxon>
        <taxon>Craniata</taxon>
        <taxon>Vertebrata</taxon>
        <taxon>Euteleostomi</taxon>
        <taxon>Mammalia</taxon>
        <taxon>Eutheria</taxon>
        <taxon>Euarchontoglires</taxon>
        <taxon>Primates</taxon>
        <taxon>Haplorrhini</taxon>
        <taxon>Catarrhini</taxon>
        <taxon>Hominidae</taxon>
        <taxon>Pan</taxon>
    </lineage>
</organism>
<gene>
    <name type="primary">PCDHAC2</name>
</gene>
<name>PCDC2_PANTR</name>
<feature type="signal peptide" evidence="2">
    <location>
        <begin position="1"/>
        <end position="42"/>
    </location>
</feature>
<feature type="chain" id="PRO_0000003913" description="Protocadherin alpha-C2">
    <location>
        <begin position="43"/>
        <end position="1007"/>
    </location>
</feature>
<feature type="topological domain" description="Extracellular" evidence="2">
    <location>
        <begin position="43"/>
        <end position="708"/>
    </location>
</feature>
<feature type="transmembrane region" description="Helical" evidence="2">
    <location>
        <begin position="709"/>
        <end position="729"/>
    </location>
</feature>
<feature type="topological domain" description="Cytoplasmic" evidence="2">
    <location>
        <begin position="730"/>
        <end position="1007"/>
    </location>
</feature>
<feature type="domain" description="Cadherin 1" evidence="3">
    <location>
        <begin position="43"/>
        <end position="148"/>
    </location>
</feature>
<feature type="domain" description="Cadherin 2" evidence="3">
    <location>
        <begin position="149"/>
        <end position="257"/>
    </location>
</feature>
<feature type="domain" description="Cadherin 3" evidence="3">
    <location>
        <begin position="258"/>
        <end position="365"/>
    </location>
</feature>
<feature type="domain" description="Cadherin 4" evidence="3">
    <location>
        <begin position="374"/>
        <end position="469"/>
    </location>
</feature>
<feature type="domain" description="Cadherin 5" evidence="3">
    <location>
        <begin position="470"/>
        <end position="579"/>
    </location>
</feature>
<feature type="domain" description="Cadherin 6" evidence="3">
    <location>
        <begin position="594"/>
        <end position="691"/>
    </location>
</feature>
<feature type="repeat" description="PXXP 1">
    <location>
        <begin position="856"/>
        <end position="859"/>
    </location>
</feature>
<feature type="repeat" description="PXXP 2">
    <location>
        <begin position="889"/>
        <end position="892"/>
    </location>
</feature>
<feature type="repeat" description="PXXP 3">
    <location>
        <begin position="930"/>
        <end position="933"/>
    </location>
</feature>
<feature type="repeat" description="PXXP 4">
    <location>
        <begin position="948"/>
        <end position="951"/>
    </location>
</feature>
<feature type="region of interest" description="4 X 4 AA repeats of P-X-X-P">
    <location>
        <begin position="856"/>
        <end position="951"/>
    </location>
</feature>
<feature type="region of interest" description="Disordered" evidence="4">
    <location>
        <begin position="885"/>
        <end position="1007"/>
    </location>
</feature>
<feature type="compositionally biased region" description="Basic and acidic residues" evidence="4">
    <location>
        <begin position="966"/>
        <end position="980"/>
    </location>
</feature>
<feature type="glycosylation site" description="N-linked (GlcNAc...) asparagine" evidence="2">
    <location>
        <position position="280"/>
    </location>
</feature>
<feature type="glycosylation site" description="N-linked (GlcNAc...) asparagine" evidence="2">
    <location>
        <position position="436"/>
    </location>
</feature>
<feature type="glycosylation site" description="N-linked (GlcNAc...) asparagine" evidence="2">
    <location>
        <position position="586"/>
    </location>
</feature>
<feature type="glycosylation site" description="N-linked (GlcNAc...) asparagine" evidence="2">
    <location>
        <position position="657"/>
    </location>
</feature>
<protein>
    <recommendedName>
        <fullName>Protocadherin alpha-C2</fullName>
        <shortName>PCDH-alpha-C2</shortName>
    </recommendedName>
</protein>
<proteinExistence type="inferred from homology"/>
<reference key="1">
    <citation type="journal article" date="2005" name="Nature">
        <title>Initial sequence of the chimpanzee genome and comparison with the human genome.</title>
        <authorList>
            <consortium name="Chimpanzee sequencing and analysis consortium"/>
        </authorList>
    </citation>
    <scope>NUCLEOTIDE SEQUENCE [LARGE SCALE GENOMIC DNA]</scope>
</reference>
<reference key="2">
    <citation type="journal article" date="2005" name="Genetics">
        <title>Comparative genomics and diversifying selection of the clustered vertebrate protocadherin genes.</title>
        <authorList>
            <person name="Wu Q."/>
        </authorList>
    </citation>
    <scope>IDENTIFICATION</scope>
</reference>
<comment type="function">
    <text>Potential calcium-dependent cell-adhesion protein. May be involved in the establishment and maintenance of specific neuronal connections in the brain.</text>
</comment>
<comment type="subcellular location">
    <subcellularLocation>
        <location evidence="1">Cell membrane</location>
        <topology evidence="1">Single-pass type I membrane protein</topology>
    </subcellularLocation>
</comment>
<accession>Q5DRE1</accession>
<keyword id="KW-0106">Calcium</keyword>
<keyword id="KW-0130">Cell adhesion</keyword>
<keyword id="KW-1003">Cell membrane</keyword>
<keyword id="KW-0325">Glycoprotein</keyword>
<keyword id="KW-0472">Membrane</keyword>
<keyword id="KW-1185">Reference proteome</keyword>
<keyword id="KW-0677">Repeat</keyword>
<keyword id="KW-0732">Signal</keyword>
<keyword id="KW-0812">Transmembrane</keyword>
<keyword id="KW-1133">Transmembrane helix</keyword>